<keyword id="KW-0030">Aminoacyl-tRNA synthetase</keyword>
<keyword id="KW-0067">ATP-binding</keyword>
<keyword id="KW-0963">Cytoplasm</keyword>
<keyword id="KW-0436">Ligase</keyword>
<keyword id="KW-0479">Metal-binding</keyword>
<keyword id="KW-0547">Nucleotide-binding</keyword>
<keyword id="KW-0648">Protein biosynthesis</keyword>
<keyword id="KW-1185">Reference proteome</keyword>
<keyword id="KW-0694">RNA-binding</keyword>
<keyword id="KW-0820">tRNA-binding</keyword>
<keyword id="KW-0862">Zinc</keyword>
<accession>Q8F0T4</accession>
<dbReference type="EC" id="6.1.1.7" evidence="1"/>
<dbReference type="EMBL" id="AE010300">
    <property type="protein sequence ID" value="AAN50605.1"/>
    <property type="molecule type" value="Genomic_DNA"/>
</dbReference>
<dbReference type="RefSeq" id="NP_713587.1">
    <property type="nucleotide sequence ID" value="NC_004342.2"/>
</dbReference>
<dbReference type="RefSeq" id="WP_000802924.1">
    <property type="nucleotide sequence ID" value="NC_004342.2"/>
</dbReference>
<dbReference type="SMR" id="Q8F0T4"/>
<dbReference type="FunCoup" id="Q8F0T4">
    <property type="interactions" value="516"/>
</dbReference>
<dbReference type="STRING" id="189518.LA_3407"/>
<dbReference type="PaxDb" id="189518-LA_3407"/>
<dbReference type="EnsemblBacteria" id="AAN50605">
    <property type="protein sequence ID" value="AAN50605"/>
    <property type="gene ID" value="LA_3407"/>
</dbReference>
<dbReference type="KEGG" id="lil:LA_3407"/>
<dbReference type="PATRIC" id="fig|189518.3.peg.3374"/>
<dbReference type="HOGENOM" id="CLU_004485_1_1_12"/>
<dbReference type="InParanoid" id="Q8F0T4"/>
<dbReference type="OrthoDB" id="9803884at2"/>
<dbReference type="Proteomes" id="UP000001408">
    <property type="component" value="Chromosome I"/>
</dbReference>
<dbReference type="GO" id="GO:0005829">
    <property type="term" value="C:cytosol"/>
    <property type="evidence" value="ECO:0000318"/>
    <property type="project" value="GO_Central"/>
</dbReference>
<dbReference type="GO" id="GO:0004813">
    <property type="term" value="F:alanine-tRNA ligase activity"/>
    <property type="evidence" value="ECO:0000318"/>
    <property type="project" value="GO_Central"/>
</dbReference>
<dbReference type="GO" id="GO:0002161">
    <property type="term" value="F:aminoacyl-tRNA deacylase activity"/>
    <property type="evidence" value="ECO:0000318"/>
    <property type="project" value="GO_Central"/>
</dbReference>
<dbReference type="GO" id="GO:0005524">
    <property type="term" value="F:ATP binding"/>
    <property type="evidence" value="ECO:0007669"/>
    <property type="project" value="UniProtKB-UniRule"/>
</dbReference>
<dbReference type="GO" id="GO:0000049">
    <property type="term" value="F:tRNA binding"/>
    <property type="evidence" value="ECO:0007669"/>
    <property type="project" value="UniProtKB-KW"/>
</dbReference>
<dbReference type="GO" id="GO:0008270">
    <property type="term" value="F:zinc ion binding"/>
    <property type="evidence" value="ECO:0007669"/>
    <property type="project" value="UniProtKB-UniRule"/>
</dbReference>
<dbReference type="GO" id="GO:0006419">
    <property type="term" value="P:alanyl-tRNA aminoacylation"/>
    <property type="evidence" value="ECO:0000318"/>
    <property type="project" value="GO_Central"/>
</dbReference>
<dbReference type="CDD" id="cd00673">
    <property type="entry name" value="AlaRS_core"/>
    <property type="match status" value="1"/>
</dbReference>
<dbReference type="FunFam" id="2.40.30.130:FF:000029">
    <property type="entry name" value="Alanine--tRNA ligase"/>
    <property type="match status" value="1"/>
</dbReference>
<dbReference type="FunFam" id="3.10.310.40:FF:000001">
    <property type="entry name" value="Alanine--tRNA ligase"/>
    <property type="match status" value="1"/>
</dbReference>
<dbReference type="FunFam" id="3.30.54.20:FF:000001">
    <property type="entry name" value="Alanine--tRNA ligase"/>
    <property type="match status" value="1"/>
</dbReference>
<dbReference type="FunFam" id="3.30.930.10:FF:000004">
    <property type="entry name" value="Alanine--tRNA ligase"/>
    <property type="match status" value="1"/>
</dbReference>
<dbReference type="FunFam" id="3.30.980.10:FF:000004">
    <property type="entry name" value="Alanine--tRNA ligase, cytoplasmic"/>
    <property type="match status" value="1"/>
</dbReference>
<dbReference type="Gene3D" id="2.40.30.130">
    <property type="match status" value="1"/>
</dbReference>
<dbReference type="Gene3D" id="3.10.310.40">
    <property type="match status" value="1"/>
</dbReference>
<dbReference type="Gene3D" id="3.30.54.20">
    <property type="match status" value="1"/>
</dbReference>
<dbReference type="Gene3D" id="3.30.930.10">
    <property type="entry name" value="Bira Bifunctional Protein, Domain 2"/>
    <property type="match status" value="1"/>
</dbReference>
<dbReference type="Gene3D" id="3.30.980.10">
    <property type="entry name" value="Threonyl-trna Synthetase, Chain A, domain 2"/>
    <property type="match status" value="1"/>
</dbReference>
<dbReference type="HAMAP" id="MF_00036_B">
    <property type="entry name" value="Ala_tRNA_synth_B"/>
    <property type="match status" value="1"/>
</dbReference>
<dbReference type="InterPro" id="IPR045864">
    <property type="entry name" value="aa-tRNA-synth_II/BPL/LPL"/>
</dbReference>
<dbReference type="InterPro" id="IPR002318">
    <property type="entry name" value="Ala-tRNA-lgiase_IIc"/>
</dbReference>
<dbReference type="InterPro" id="IPR018162">
    <property type="entry name" value="Ala-tRNA-ligase_IIc_anticod-bd"/>
</dbReference>
<dbReference type="InterPro" id="IPR018165">
    <property type="entry name" value="Ala-tRNA-synth_IIc_core"/>
</dbReference>
<dbReference type="InterPro" id="IPR018164">
    <property type="entry name" value="Ala-tRNA-synth_IIc_N"/>
</dbReference>
<dbReference type="InterPro" id="IPR050058">
    <property type="entry name" value="Ala-tRNA_ligase"/>
</dbReference>
<dbReference type="InterPro" id="IPR023033">
    <property type="entry name" value="Ala_tRNA_ligase_euk/bac"/>
</dbReference>
<dbReference type="InterPro" id="IPR003156">
    <property type="entry name" value="DHHA1_dom"/>
</dbReference>
<dbReference type="InterPro" id="IPR018163">
    <property type="entry name" value="Thr/Ala-tRNA-synth_IIc_edit"/>
</dbReference>
<dbReference type="InterPro" id="IPR009000">
    <property type="entry name" value="Transl_B-barrel_sf"/>
</dbReference>
<dbReference type="InterPro" id="IPR012947">
    <property type="entry name" value="tRNA_SAD"/>
</dbReference>
<dbReference type="NCBIfam" id="TIGR00344">
    <property type="entry name" value="alaS"/>
    <property type="match status" value="1"/>
</dbReference>
<dbReference type="PANTHER" id="PTHR11777:SF9">
    <property type="entry name" value="ALANINE--TRNA LIGASE, CYTOPLASMIC"/>
    <property type="match status" value="1"/>
</dbReference>
<dbReference type="PANTHER" id="PTHR11777">
    <property type="entry name" value="ALANYL-TRNA SYNTHETASE"/>
    <property type="match status" value="1"/>
</dbReference>
<dbReference type="Pfam" id="PF02272">
    <property type="entry name" value="DHHA1"/>
    <property type="match status" value="1"/>
</dbReference>
<dbReference type="Pfam" id="PF01411">
    <property type="entry name" value="tRNA-synt_2c"/>
    <property type="match status" value="1"/>
</dbReference>
<dbReference type="Pfam" id="PF07973">
    <property type="entry name" value="tRNA_SAD"/>
    <property type="match status" value="1"/>
</dbReference>
<dbReference type="PRINTS" id="PR00980">
    <property type="entry name" value="TRNASYNTHALA"/>
</dbReference>
<dbReference type="SMART" id="SM00863">
    <property type="entry name" value="tRNA_SAD"/>
    <property type="match status" value="1"/>
</dbReference>
<dbReference type="SUPFAM" id="SSF55681">
    <property type="entry name" value="Class II aaRS and biotin synthetases"/>
    <property type="match status" value="1"/>
</dbReference>
<dbReference type="SUPFAM" id="SSF101353">
    <property type="entry name" value="Putative anticodon-binding domain of alanyl-tRNA synthetase (AlaRS)"/>
    <property type="match status" value="1"/>
</dbReference>
<dbReference type="SUPFAM" id="SSF55186">
    <property type="entry name" value="ThrRS/AlaRS common domain"/>
    <property type="match status" value="1"/>
</dbReference>
<dbReference type="SUPFAM" id="SSF50447">
    <property type="entry name" value="Translation proteins"/>
    <property type="match status" value="1"/>
</dbReference>
<dbReference type="PROSITE" id="PS50860">
    <property type="entry name" value="AA_TRNA_LIGASE_II_ALA"/>
    <property type="match status" value="1"/>
</dbReference>
<sequence>MKPKSVSEIREIFLNYFKDKSHNVVPSSSLLPAGDPTLLFTTAGMVQFKPLFTGAVELPYTRATSCQKCLRTTDLEVVGKTERHCTFFEMLGNFSFGDYFKEEAIEYALDCSVNHFGFDKNKIWVTVYTDDDEAEKIWLSKGIPKERITRLGKKDNFWGPAGDSGACGPCSELYLDRGIEKGGPNCATSGTCKPGCDCDRFLEFWNIVFNQFNQDTEGNLHPLKQTGIDTGSGLERVALLLQEVDSVYDTNELRKIISFYEELSGISYEDKTLSEISEKKNNNQQISSQVRNETKSIQDSRKTAFRVVTDHIRSVLFSIGDGIYPDRTGRGYVIRRLIRRATLFGRKLNFKEPFLYKLVDKVIEIYKARYPELQRNAAAITKTILVEEELFLKTLELGLEKIESLVQKTKAGGKTIFSGADAFLLYGTYGFPAEMTEEIVAEQGLDFDKKGFQEELEKDRQFSRESWKVNKVSLMTGLNVDKTEFLGYSSVSGKGNITHLFYNSPKSSNSLSQVDSKLQSSTPAGTGSYDSKQVSSLKEGQAGAIVLNKTPFYPEGGGQVGDIGFLRQGKNVFKVFDTQKENDSIIHFGEVLSGEFIVSQELEAEVEITRRERLKFHHSGTHLLNGALRTLLGDHVLQKGSIVSPEYLRFDFSHPSSLTSEEIRQIESWVNESIRKNFPVETKELSIEDAKKTGAVATFGEKYGERVRVVQMGDASIEFCGGTHVSRTGEIGYFFIKKESSPGAGNRRIEGVCGPAVIETFQNRFSELTESVQNLNLKIKSELGEEGTKILILSFIPGPDEIREKLEKEGASAVSFFRDLSENIATKIEENTSSFLKIKKNLAERDFENNTSVIENVLASSVDTGIGKIVSAIFEDKDPNSLKGLSDNLKVREKNLLVILGSRNSENASIVITCSSELTLKGIHCGNLIKTACELLGGKGGGRPDMAQGGGKEKQNLESAIAGVINEAKQILTGERV</sequence>
<feature type="chain" id="PRO_0000075136" description="Alanine--tRNA ligase">
    <location>
        <begin position="1"/>
        <end position="977"/>
    </location>
</feature>
<feature type="region of interest" description="Disordered" evidence="2">
    <location>
        <begin position="512"/>
        <end position="535"/>
    </location>
</feature>
<feature type="binding site" evidence="1">
    <location>
        <position position="618"/>
    </location>
    <ligand>
        <name>Zn(2+)</name>
        <dbReference type="ChEBI" id="CHEBI:29105"/>
    </ligand>
</feature>
<feature type="binding site" evidence="1">
    <location>
        <position position="622"/>
    </location>
    <ligand>
        <name>Zn(2+)</name>
        <dbReference type="ChEBI" id="CHEBI:29105"/>
    </ligand>
</feature>
<feature type="binding site" evidence="1">
    <location>
        <position position="720"/>
    </location>
    <ligand>
        <name>Zn(2+)</name>
        <dbReference type="ChEBI" id="CHEBI:29105"/>
    </ligand>
</feature>
<feature type="binding site" evidence="1">
    <location>
        <position position="724"/>
    </location>
    <ligand>
        <name>Zn(2+)</name>
        <dbReference type="ChEBI" id="CHEBI:29105"/>
    </ligand>
</feature>
<proteinExistence type="inferred from homology"/>
<name>SYA_LEPIN</name>
<comment type="function">
    <text evidence="1">Catalyzes the attachment of alanine to tRNA(Ala) in a two-step reaction: alanine is first activated by ATP to form Ala-AMP and then transferred to the acceptor end of tRNA(Ala). Also edits incorrectly charged Ser-tRNA(Ala) and Gly-tRNA(Ala) via its editing domain.</text>
</comment>
<comment type="catalytic activity">
    <reaction evidence="1">
        <text>tRNA(Ala) + L-alanine + ATP = L-alanyl-tRNA(Ala) + AMP + diphosphate</text>
        <dbReference type="Rhea" id="RHEA:12540"/>
        <dbReference type="Rhea" id="RHEA-COMP:9657"/>
        <dbReference type="Rhea" id="RHEA-COMP:9923"/>
        <dbReference type="ChEBI" id="CHEBI:30616"/>
        <dbReference type="ChEBI" id="CHEBI:33019"/>
        <dbReference type="ChEBI" id="CHEBI:57972"/>
        <dbReference type="ChEBI" id="CHEBI:78442"/>
        <dbReference type="ChEBI" id="CHEBI:78497"/>
        <dbReference type="ChEBI" id="CHEBI:456215"/>
        <dbReference type="EC" id="6.1.1.7"/>
    </reaction>
</comment>
<comment type="cofactor">
    <cofactor evidence="1">
        <name>Zn(2+)</name>
        <dbReference type="ChEBI" id="CHEBI:29105"/>
    </cofactor>
    <text evidence="1">Binds 1 zinc ion per subunit.</text>
</comment>
<comment type="subcellular location">
    <subcellularLocation>
        <location evidence="1">Cytoplasm</location>
    </subcellularLocation>
</comment>
<comment type="domain">
    <text evidence="1">Consists of three domains; the N-terminal catalytic domain, the editing domain and the C-terminal C-Ala domain. The editing domain removes incorrectly charged amino acids, while the C-Ala domain, along with tRNA(Ala), serves as a bridge to cooperatively bring together the editing and aminoacylation centers thus stimulating deacylation of misacylated tRNAs.</text>
</comment>
<comment type="similarity">
    <text evidence="1">Belongs to the class-II aminoacyl-tRNA synthetase family.</text>
</comment>
<organism>
    <name type="scientific">Leptospira interrogans serogroup Icterohaemorrhagiae serovar Lai (strain 56601)</name>
    <dbReference type="NCBI Taxonomy" id="189518"/>
    <lineage>
        <taxon>Bacteria</taxon>
        <taxon>Pseudomonadati</taxon>
        <taxon>Spirochaetota</taxon>
        <taxon>Spirochaetia</taxon>
        <taxon>Leptospirales</taxon>
        <taxon>Leptospiraceae</taxon>
        <taxon>Leptospira</taxon>
    </lineage>
</organism>
<protein>
    <recommendedName>
        <fullName evidence="1">Alanine--tRNA ligase</fullName>
        <ecNumber evidence="1">6.1.1.7</ecNumber>
    </recommendedName>
    <alternativeName>
        <fullName evidence="1">Alanyl-tRNA synthetase</fullName>
        <shortName evidence="1">AlaRS</shortName>
    </alternativeName>
</protein>
<evidence type="ECO:0000255" key="1">
    <source>
        <dbReference type="HAMAP-Rule" id="MF_00036"/>
    </source>
</evidence>
<evidence type="ECO:0000256" key="2">
    <source>
        <dbReference type="SAM" id="MobiDB-lite"/>
    </source>
</evidence>
<gene>
    <name evidence="1" type="primary">alaS</name>
    <name type="ordered locus">LA_3407</name>
</gene>
<reference key="1">
    <citation type="journal article" date="2003" name="Nature">
        <title>Unique physiological and pathogenic features of Leptospira interrogans revealed by whole-genome sequencing.</title>
        <authorList>
            <person name="Ren S.-X."/>
            <person name="Fu G."/>
            <person name="Jiang X.-G."/>
            <person name="Zeng R."/>
            <person name="Miao Y.-G."/>
            <person name="Xu H."/>
            <person name="Zhang Y.-X."/>
            <person name="Xiong H."/>
            <person name="Lu G."/>
            <person name="Lu L.-F."/>
            <person name="Jiang H.-Q."/>
            <person name="Jia J."/>
            <person name="Tu Y.-F."/>
            <person name="Jiang J.-X."/>
            <person name="Gu W.-Y."/>
            <person name="Zhang Y.-Q."/>
            <person name="Cai Z."/>
            <person name="Sheng H.-H."/>
            <person name="Yin H.-F."/>
            <person name="Zhang Y."/>
            <person name="Zhu G.-F."/>
            <person name="Wan M."/>
            <person name="Huang H.-L."/>
            <person name="Qian Z."/>
            <person name="Wang S.-Y."/>
            <person name="Ma W."/>
            <person name="Yao Z.-J."/>
            <person name="Shen Y."/>
            <person name="Qiang B.-Q."/>
            <person name="Xia Q.-C."/>
            <person name="Guo X.-K."/>
            <person name="Danchin A."/>
            <person name="Saint Girons I."/>
            <person name="Somerville R.L."/>
            <person name="Wen Y.-M."/>
            <person name="Shi M.-H."/>
            <person name="Chen Z."/>
            <person name="Xu J.-G."/>
            <person name="Zhao G.-P."/>
        </authorList>
    </citation>
    <scope>NUCLEOTIDE SEQUENCE [LARGE SCALE GENOMIC DNA]</scope>
    <source>
        <strain>56601</strain>
    </source>
</reference>